<comment type="function">
    <text evidence="2">Component of an amino-acid transport system.</text>
</comment>
<comment type="similarity">
    <text evidence="2">Belongs to the leucine-binding protein family.</text>
</comment>
<protein>
    <recommendedName>
        <fullName>Leu/Ile/Val-binding protein homolog 5</fullName>
    </recommendedName>
</protein>
<reference key="1">
    <citation type="journal article" date="2002" name="Proc. Natl. Acad. Sci. U.S.A.">
        <title>The Brucella suis genome reveals fundamental similarities between animal and plant pathogens and symbionts.</title>
        <authorList>
            <person name="Paulsen I.T."/>
            <person name="Seshadri R."/>
            <person name="Nelson K.E."/>
            <person name="Eisen J.A."/>
            <person name="Heidelberg J.F."/>
            <person name="Read T.D."/>
            <person name="Dodson R.J."/>
            <person name="Umayam L.A."/>
            <person name="Brinkac L.M."/>
            <person name="Beanan M.J."/>
            <person name="Daugherty S.C."/>
            <person name="DeBoy R.T."/>
            <person name="Durkin A.S."/>
            <person name="Kolonay J.F."/>
            <person name="Madupu R."/>
            <person name="Nelson W.C."/>
            <person name="Ayodeji B."/>
            <person name="Kraul M."/>
            <person name="Shetty J."/>
            <person name="Malek J.A."/>
            <person name="Van Aken S.E."/>
            <person name="Riedmuller S."/>
            <person name="Tettelin H."/>
            <person name="Gill S.R."/>
            <person name="White O."/>
            <person name="Salzberg S.L."/>
            <person name="Hoover D.L."/>
            <person name="Lindler L.E."/>
            <person name="Halling S.M."/>
            <person name="Boyle S.M."/>
            <person name="Fraser C.M."/>
        </authorList>
    </citation>
    <scope>NUCLEOTIDE SEQUENCE [LARGE SCALE GENOMIC DNA]</scope>
    <source>
        <strain>1330</strain>
    </source>
</reference>
<reference key="2">
    <citation type="journal article" date="2011" name="J. Bacteriol.">
        <title>Revised genome sequence of Brucella suis 1330.</title>
        <authorList>
            <person name="Tae H."/>
            <person name="Shallom S."/>
            <person name="Settlage R."/>
            <person name="Preston D."/>
            <person name="Adams L.G."/>
            <person name="Garner H.R."/>
        </authorList>
    </citation>
    <scope>NUCLEOTIDE SEQUENCE [LARGE SCALE GENOMIC DNA]</scope>
    <source>
        <strain>1330</strain>
    </source>
</reference>
<proteinExistence type="inferred from homology"/>
<accession>Q8FUM7</accession>
<accession>G0KEI9</accession>
<feature type="signal peptide" evidence="1">
    <location>
        <begin position="1"/>
        <end position="29"/>
    </location>
</feature>
<feature type="chain" id="PRO_0000282528" description="Leu/Ile/Val-binding protein homolog 5">
    <location>
        <begin position="30"/>
        <end position="406"/>
    </location>
</feature>
<gene>
    <name type="ordered locus">BRA1193</name>
    <name type="ordered locus">BS1330_II1184</name>
</gene>
<evidence type="ECO:0000255" key="1"/>
<evidence type="ECO:0000305" key="2"/>
<organism>
    <name type="scientific">Brucella suis biovar 1 (strain 1330)</name>
    <dbReference type="NCBI Taxonomy" id="204722"/>
    <lineage>
        <taxon>Bacteria</taxon>
        <taxon>Pseudomonadati</taxon>
        <taxon>Pseudomonadota</taxon>
        <taxon>Alphaproteobacteria</taxon>
        <taxon>Hyphomicrobiales</taxon>
        <taxon>Brucellaceae</taxon>
        <taxon>Brucella/Ochrobactrum group</taxon>
        <taxon>Brucella</taxon>
    </lineage>
</organism>
<sequence length="406" mass="44196">MIGTRLPAWTRVLACGVAGLSLMTISAKAEDVITLGASVQLSGPVANTGRYYQDAYNITIDKINAAGGVKVDGKPYKLALKIYDNQSNVNLSVRQYTQLVTTDKVNFLLGPFASNFALADSVISEKYRIPMVQGGGASDEIYSRNFKYIFGTLAPASNYFGSTVEMLKGLDPKVTNVALVYADDSFDISVADGTRKLLKDAGFTIAADEKFATNSTDFTSLISQIKSKNVDAVLVAGHETEVLNFVRQSKSLAFDPKLYSFTVGVPTEDFRKALGKDANYAFGMTAWLPSADLKDRWFGDAAKFETEYKARFNYEPDYHAASGASDVEAFAEAIEKANSLDPQKVRDALASIKFDSLYGPIAFDKQGQINLPQIVVQVQDGKLVEIRGPAGQVNPPQYPMPAWNAR</sequence>
<name>LIVB5_BRUSU</name>
<keyword id="KW-0029">Amino-acid transport</keyword>
<keyword id="KW-0732">Signal</keyword>
<keyword id="KW-0813">Transport</keyword>
<dbReference type="EMBL" id="AE014292">
    <property type="protein sequence ID" value="AAN34351.1"/>
    <property type="molecule type" value="Genomic_DNA"/>
</dbReference>
<dbReference type="EMBL" id="CP002998">
    <property type="protein sequence ID" value="AEM20627.1"/>
    <property type="molecule type" value="Genomic_DNA"/>
</dbReference>
<dbReference type="RefSeq" id="WP_006191545.1">
    <property type="nucleotide sequence ID" value="NZ_KN046805.1"/>
</dbReference>
<dbReference type="SMR" id="Q8FUM7"/>
<dbReference type="GeneID" id="45054173"/>
<dbReference type="KEGG" id="bms:BRA1193"/>
<dbReference type="KEGG" id="bsi:BS1330_II1184"/>
<dbReference type="PATRIC" id="fig|204722.21.peg.285"/>
<dbReference type="HOGENOM" id="CLU_027128_4_1_5"/>
<dbReference type="Proteomes" id="UP000007104">
    <property type="component" value="Chromosome II"/>
</dbReference>
<dbReference type="GO" id="GO:0006865">
    <property type="term" value="P:amino acid transport"/>
    <property type="evidence" value="ECO:0007669"/>
    <property type="project" value="UniProtKB-KW"/>
</dbReference>
<dbReference type="CDD" id="cd06338">
    <property type="entry name" value="PBP1_ABC_ligand_binding-like"/>
    <property type="match status" value="1"/>
</dbReference>
<dbReference type="Gene3D" id="3.40.50.2300">
    <property type="match status" value="2"/>
</dbReference>
<dbReference type="InterPro" id="IPR051010">
    <property type="entry name" value="BCAA_transport"/>
</dbReference>
<dbReference type="InterPro" id="IPR028081">
    <property type="entry name" value="Leu-bd"/>
</dbReference>
<dbReference type="InterPro" id="IPR028082">
    <property type="entry name" value="Peripla_BP_I"/>
</dbReference>
<dbReference type="PANTHER" id="PTHR30483:SF37">
    <property type="entry name" value="ABC TRANSPORTER SUBSTRATE-BINDING PROTEIN"/>
    <property type="match status" value="1"/>
</dbReference>
<dbReference type="PANTHER" id="PTHR30483">
    <property type="entry name" value="LEUCINE-SPECIFIC-BINDING PROTEIN"/>
    <property type="match status" value="1"/>
</dbReference>
<dbReference type="Pfam" id="PF13458">
    <property type="entry name" value="Peripla_BP_6"/>
    <property type="match status" value="1"/>
</dbReference>
<dbReference type="SUPFAM" id="SSF53822">
    <property type="entry name" value="Periplasmic binding protein-like I"/>
    <property type="match status" value="1"/>
</dbReference>